<protein>
    <recommendedName>
        <fullName evidence="1">S-adenosylmethionine synthase</fullName>
        <shortName evidence="1">AdoMet synthase</shortName>
        <ecNumber evidence="1">2.5.1.6</ecNumber>
    </recommendedName>
    <alternativeName>
        <fullName evidence="1">MAT</fullName>
    </alternativeName>
    <alternativeName>
        <fullName evidence="1">Methionine adenosyltransferase</fullName>
    </alternativeName>
</protein>
<reference key="1">
    <citation type="submission" date="2007-08" db="EMBL/GenBank/DDBJ databases">
        <authorList>
            <consortium name="The Citrobacter koseri Genome Sequencing Project"/>
            <person name="McClelland M."/>
            <person name="Sanderson E.K."/>
            <person name="Porwollik S."/>
            <person name="Spieth J."/>
            <person name="Clifton W.S."/>
            <person name="Latreille P."/>
            <person name="Courtney L."/>
            <person name="Wang C."/>
            <person name="Pepin K."/>
            <person name="Bhonagiri V."/>
            <person name="Nash W."/>
            <person name="Johnson M."/>
            <person name="Thiruvilangam P."/>
            <person name="Wilson R."/>
        </authorList>
    </citation>
    <scope>NUCLEOTIDE SEQUENCE [LARGE SCALE GENOMIC DNA]</scope>
    <source>
        <strain>ATCC BAA-895 / CDC 4225-83 / SGSC4696</strain>
    </source>
</reference>
<gene>
    <name evidence="1" type="primary">metK</name>
    <name type="ordered locus">CKO_04317</name>
</gene>
<sequence length="384" mass="41965">MAKHLFTSESVSEGHPDKIADQISDAVLDAILEQDPKARVACETYVKTGMVLVGGEITTSAWVDIEEITRNTVREIGYVHSDMGFDANSCAVLSAIGKQSPDINQGVDRADPLEQGAGDQGLMFGYATNETDVLMPAPITYAHRLVQRQAEVRKNGTLPWLRPDAKSQVTFQYDDGKIVGIDAVVLSTQHAEEIDQKSLQEAVMEEIIKPILPSEWLNASTKFFINPTGRFVIGGPMGDCGLTGRKIIVDTYGGMARHGGGAFSGKDPSKVDRSAAYAARYVAKNIVAAGLADRCEIQVSYAIGVAEPTSIMVETFGTEKVPSEQLTLLVREFFDLRPYGLIQMLDLLHPIYKETAAYGHFGREHFPWEKTDKAQLLRDAAGLK</sequence>
<feature type="chain" id="PRO_1000007933" description="S-adenosylmethionine synthase">
    <location>
        <begin position="1"/>
        <end position="384"/>
    </location>
</feature>
<feature type="region of interest" description="Flexible loop" evidence="1">
    <location>
        <begin position="99"/>
        <end position="109"/>
    </location>
</feature>
<feature type="binding site" description="in other chain" evidence="1">
    <location>
        <position position="15"/>
    </location>
    <ligand>
        <name>ATP</name>
        <dbReference type="ChEBI" id="CHEBI:30616"/>
        <note>ligand shared between two neighboring subunits</note>
    </ligand>
</feature>
<feature type="binding site" evidence="1">
    <location>
        <position position="17"/>
    </location>
    <ligand>
        <name>Mg(2+)</name>
        <dbReference type="ChEBI" id="CHEBI:18420"/>
    </ligand>
</feature>
<feature type="binding site" evidence="1">
    <location>
        <position position="43"/>
    </location>
    <ligand>
        <name>K(+)</name>
        <dbReference type="ChEBI" id="CHEBI:29103"/>
    </ligand>
</feature>
<feature type="binding site" description="in other chain" evidence="1">
    <location>
        <position position="56"/>
    </location>
    <ligand>
        <name>L-methionine</name>
        <dbReference type="ChEBI" id="CHEBI:57844"/>
        <note>ligand shared between two neighboring subunits</note>
    </ligand>
</feature>
<feature type="binding site" description="in other chain" evidence="1">
    <location>
        <position position="99"/>
    </location>
    <ligand>
        <name>L-methionine</name>
        <dbReference type="ChEBI" id="CHEBI:57844"/>
        <note>ligand shared between two neighboring subunits</note>
    </ligand>
</feature>
<feature type="binding site" description="in other chain" evidence="1">
    <location>
        <begin position="164"/>
        <end position="166"/>
    </location>
    <ligand>
        <name>ATP</name>
        <dbReference type="ChEBI" id="CHEBI:30616"/>
        <note>ligand shared between two neighboring subunits</note>
    </ligand>
</feature>
<feature type="binding site" description="in other chain" evidence="1">
    <location>
        <begin position="230"/>
        <end position="231"/>
    </location>
    <ligand>
        <name>ATP</name>
        <dbReference type="ChEBI" id="CHEBI:30616"/>
        <note>ligand shared between two neighboring subunits</note>
    </ligand>
</feature>
<feature type="binding site" evidence="1">
    <location>
        <position position="239"/>
    </location>
    <ligand>
        <name>ATP</name>
        <dbReference type="ChEBI" id="CHEBI:30616"/>
        <note>ligand shared between two neighboring subunits</note>
    </ligand>
</feature>
<feature type="binding site" evidence="1">
    <location>
        <position position="239"/>
    </location>
    <ligand>
        <name>L-methionine</name>
        <dbReference type="ChEBI" id="CHEBI:57844"/>
        <note>ligand shared between two neighboring subunits</note>
    </ligand>
</feature>
<feature type="binding site" description="in other chain" evidence="1">
    <location>
        <begin position="245"/>
        <end position="246"/>
    </location>
    <ligand>
        <name>ATP</name>
        <dbReference type="ChEBI" id="CHEBI:30616"/>
        <note>ligand shared between two neighboring subunits</note>
    </ligand>
</feature>
<feature type="binding site" evidence="1">
    <location>
        <position position="262"/>
    </location>
    <ligand>
        <name>ATP</name>
        <dbReference type="ChEBI" id="CHEBI:30616"/>
        <note>ligand shared between two neighboring subunits</note>
    </ligand>
</feature>
<feature type="binding site" evidence="1">
    <location>
        <position position="266"/>
    </location>
    <ligand>
        <name>ATP</name>
        <dbReference type="ChEBI" id="CHEBI:30616"/>
        <note>ligand shared between two neighboring subunits</note>
    </ligand>
</feature>
<feature type="binding site" description="in other chain" evidence="1">
    <location>
        <position position="270"/>
    </location>
    <ligand>
        <name>L-methionine</name>
        <dbReference type="ChEBI" id="CHEBI:57844"/>
        <note>ligand shared between two neighboring subunits</note>
    </ligand>
</feature>
<evidence type="ECO:0000255" key="1">
    <source>
        <dbReference type="HAMAP-Rule" id="MF_00086"/>
    </source>
</evidence>
<accession>A8APG1</accession>
<proteinExistence type="inferred from homology"/>
<comment type="function">
    <text evidence="1">Catalyzes the formation of S-adenosylmethionine (AdoMet) from methionine and ATP. The overall synthetic reaction is composed of two sequential steps, AdoMet formation and the subsequent tripolyphosphate hydrolysis which occurs prior to release of AdoMet from the enzyme.</text>
</comment>
<comment type="catalytic activity">
    <reaction evidence="1">
        <text>L-methionine + ATP + H2O = S-adenosyl-L-methionine + phosphate + diphosphate</text>
        <dbReference type="Rhea" id="RHEA:21080"/>
        <dbReference type="ChEBI" id="CHEBI:15377"/>
        <dbReference type="ChEBI" id="CHEBI:30616"/>
        <dbReference type="ChEBI" id="CHEBI:33019"/>
        <dbReference type="ChEBI" id="CHEBI:43474"/>
        <dbReference type="ChEBI" id="CHEBI:57844"/>
        <dbReference type="ChEBI" id="CHEBI:59789"/>
        <dbReference type="EC" id="2.5.1.6"/>
    </reaction>
</comment>
<comment type="cofactor">
    <cofactor evidence="1">
        <name>Mg(2+)</name>
        <dbReference type="ChEBI" id="CHEBI:18420"/>
    </cofactor>
    <text evidence="1">Binds 2 divalent ions per subunit.</text>
</comment>
<comment type="cofactor">
    <cofactor evidence="1">
        <name>K(+)</name>
        <dbReference type="ChEBI" id="CHEBI:29103"/>
    </cofactor>
    <text evidence="1">Binds 1 potassium ion per subunit.</text>
</comment>
<comment type="pathway">
    <text evidence="1">Amino-acid biosynthesis; S-adenosyl-L-methionine biosynthesis; S-adenosyl-L-methionine from L-methionine: step 1/1.</text>
</comment>
<comment type="subunit">
    <text evidence="1">Homotetramer; dimer of dimers.</text>
</comment>
<comment type="subcellular location">
    <subcellularLocation>
        <location evidence="1">Cytoplasm</location>
    </subcellularLocation>
</comment>
<comment type="similarity">
    <text evidence="1">Belongs to the AdoMet synthase family.</text>
</comment>
<organism>
    <name type="scientific">Citrobacter koseri (strain ATCC BAA-895 / CDC 4225-83 / SGSC4696)</name>
    <dbReference type="NCBI Taxonomy" id="290338"/>
    <lineage>
        <taxon>Bacteria</taxon>
        <taxon>Pseudomonadati</taxon>
        <taxon>Pseudomonadota</taxon>
        <taxon>Gammaproteobacteria</taxon>
        <taxon>Enterobacterales</taxon>
        <taxon>Enterobacteriaceae</taxon>
        <taxon>Citrobacter</taxon>
    </lineage>
</organism>
<keyword id="KW-0067">ATP-binding</keyword>
<keyword id="KW-0963">Cytoplasm</keyword>
<keyword id="KW-0460">Magnesium</keyword>
<keyword id="KW-0479">Metal-binding</keyword>
<keyword id="KW-0547">Nucleotide-binding</keyword>
<keyword id="KW-0554">One-carbon metabolism</keyword>
<keyword id="KW-0630">Potassium</keyword>
<keyword id="KW-1185">Reference proteome</keyword>
<keyword id="KW-0808">Transferase</keyword>
<name>METK_CITK8</name>
<dbReference type="EC" id="2.5.1.6" evidence="1"/>
<dbReference type="EMBL" id="CP000822">
    <property type="protein sequence ID" value="ABV15374.1"/>
    <property type="molecule type" value="Genomic_DNA"/>
</dbReference>
<dbReference type="RefSeq" id="WP_012135057.1">
    <property type="nucleotide sequence ID" value="NC_009792.1"/>
</dbReference>
<dbReference type="SMR" id="A8APG1"/>
<dbReference type="STRING" id="290338.CKO_04317"/>
<dbReference type="GeneID" id="45137908"/>
<dbReference type="KEGG" id="cko:CKO_04317"/>
<dbReference type="HOGENOM" id="CLU_041802_1_1_6"/>
<dbReference type="OrthoDB" id="9801686at2"/>
<dbReference type="UniPathway" id="UPA00315">
    <property type="reaction ID" value="UER00080"/>
</dbReference>
<dbReference type="Proteomes" id="UP000008148">
    <property type="component" value="Chromosome"/>
</dbReference>
<dbReference type="GO" id="GO:0005737">
    <property type="term" value="C:cytoplasm"/>
    <property type="evidence" value="ECO:0007669"/>
    <property type="project" value="UniProtKB-SubCell"/>
</dbReference>
<dbReference type="GO" id="GO:0005524">
    <property type="term" value="F:ATP binding"/>
    <property type="evidence" value="ECO:0007669"/>
    <property type="project" value="UniProtKB-UniRule"/>
</dbReference>
<dbReference type="GO" id="GO:0000287">
    <property type="term" value="F:magnesium ion binding"/>
    <property type="evidence" value="ECO:0007669"/>
    <property type="project" value="UniProtKB-UniRule"/>
</dbReference>
<dbReference type="GO" id="GO:0004478">
    <property type="term" value="F:methionine adenosyltransferase activity"/>
    <property type="evidence" value="ECO:0007669"/>
    <property type="project" value="UniProtKB-UniRule"/>
</dbReference>
<dbReference type="GO" id="GO:0006730">
    <property type="term" value="P:one-carbon metabolic process"/>
    <property type="evidence" value="ECO:0007669"/>
    <property type="project" value="UniProtKB-KW"/>
</dbReference>
<dbReference type="GO" id="GO:0006556">
    <property type="term" value="P:S-adenosylmethionine biosynthetic process"/>
    <property type="evidence" value="ECO:0007669"/>
    <property type="project" value="UniProtKB-UniRule"/>
</dbReference>
<dbReference type="CDD" id="cd18079">
    <property type="entry name" value="S-AdoMet_synt"/>
    <property type="match status" value="1"/>
</dbReference>
<dbReference type="FunFam" id="3.30.300.10:FF:000001">
    <property type="entry name" value="S-adenosylmethionine synthase"/>
    <property type="match status" value="1"/>
</dbReference>
<dbReference type="FunFam" id="3.30.300.10:FF:000003">
    <property type="entry name" value="S-adenosylmethionine synthase"/>
    <property type="match status" value="1"/>
</dbReference>
<dbReference type="Gene3D" id="3.30.300.10">
    <property type="match status" value="3"/>
</dbReference>
<dbReference type="HAMAP" id="MF_00086">
    <property type="entry name" value="S_AdoMet_synth1"/>
    <property type="match status" value="1"/>
</dbReference>
<dbReference type="InterPro" id="IPR022631">
    <property type="entry name" value="ADOMET_SYNTHASE_CS"/>
</dbReference>
<dbReference type="InterPro" id="IPR022630">
    <property type="entry name" value="S-AdoMet_synt_C"/>
</dbReference>
<dbReference type="InterPro" id="IPR022629">
    <property type="entry name" value="S-AdoMet_synt_central"/>
</dbReference>
<dbReference type="InterPro" id="IPR022628">
    <property type="entry name" value="S-AdoMet_synt_N"/>
</dbReference>
<dbReference type="InterPro" id="IPR002133">
    <property type="entry name" value="S-AdoMet_synthetase"/>
</dbReference>
<dbReference type="InterPro" id="IPR022636">
    <property type="entry name" value="S-AdoMet_synthetase_sfam"/>
</dbReference>
<dbReference type="NCBIfam" id="TIGR01034">
    <property type="entry name" value="metK"/>
    <property type="match status" value="1"/>
</dbReference>
<dbReference type="PANTHER" id="PTHR11964">
    <property type="entry name" value="S-ADENOSYLMETHIONINE SYNTHETASE"/>
    <property type="match status" value="1"/>
</dbReference>
<dbReference type="Pfam" id="PF02773">
    <property type="entry name" value="S-AdoMet_synt_C"/>
    <property type="match status" value="1"/>
</dbReference>
<dbReference type="Pfam" id="PF02772">
    <property type="entry name" value="S-AdoMet_synt_M"/>
    <property type="match status" value="1"/>
</dbReference>
<dbReference type="Pfam" id="PF00438">
    <property type="entry name" value="S-AdoMet_synt_N"/>
    <property type="match status" value="1"/>
</dbReference>
<dbReference type="PIRSF" id="PIRSF000497">
    <property type="entry name" value="MAT"/>
    <property type="match status" value="1"/>
</dbReference>
<dbReference type="SUPFAM" id="SSF55973">
    <property type="entry name" value="S-adenosylmethionine synthetase"/>
    <property type="match status" value="3"/>
</dbReference>
<dbReference type="PROSITE" id="PS00376">
    <property type="entry name" value="ADOMET_SYNTHASE_1"/>
    <property type="match status" value="1"/>
</dbReference>
<dbReference type="PROSITE" id="PS00377">
    <property type="entry name" value="ADOMET_SYNTHASE_2"/>
    <property type="match status" value="1"/>
</dbReference>